<sequence length="480" mass="50080">MAVSSSSFLSTASLTNSKSNISFASSVSPSLRSVVFRSTTPATSHRRSMTVRSKIREIFMPALSSTMTEGKIVSWIKTEGEKLAKGESVVVVESDKADMDVETFYDGYLAAIVVGEGETAPVGAAIGLLAETEAEIEEAKSKAASKSSSSVAEAVVPSPPPVTSSPAPAIAQPAPVTAVSDGPRKTVATPYAKKLAKQHKVDIESVAGTGPFGRITASDVETAAGIAPSKSSIAPPPPPPPPVTAKATTTNLPPLLPDSSIVPFTAMQSAVSKNMIESLSVPTFRVGYPVNTDALDALYEKVKPKGVTMTALLAKAAGMALAQHPVVNASCKDGKSFSYNSSINIAVAVAINGGLITPVLQDADKLDLYLLSQKWKELVGKARSKQLQPHEYNSGTFTLSNLGMFGVDRFDAILPPGQGAIMAVGASKPTVVADKDGFFSVKNTMLVNVTADHRIVYGADLAAFLQTFAKIIENPDSLTL</sequence>
<feature type="transit peptide" description="Chloroplast" evidence="2">
    <location>
        <begin position="1"/>
        <end position="53"/>
    </location>
</feature>
<feature type="chain" id="PRO_0000430348" description="Dihydrolipoyllysine-residue acetyltransferase component 4 of pyruvate dehydrogenase complex, chloroplastic">
    <location>
        <begin position="54"/>
        <end position="480"/>
    </location>
</feature>
<feature type="domain" description="Lipoyl-binding" evidence="3">
    <location>
        <begin position="55"/>
        <end position="133"/>
    </location>
</feature>
<feature type="domain" description="Peripheral subunit-binding (PSBD)" evidence="4">
    <location>
        <begin position="187"/>
        <end position="224"/>
    </location>
</feature>
<feature type="region of interest" description="Disordered" evidence="5">
    <location>
        <begin position="140"/>
        <end position="168"/>
    </location>
</feature>
<feature type="region of interest" description="Disordered" evidence="5">
    <location>
        <begin position="224"/>
        <end position="245"/>
    </location>
</feature>
<feature type="compositionally biased region" description="Low complexity" evidence="5">
    <location>
        <begin position="142"/>
        <end position="156"/>
    </location>
</feature>
<feature type="compositionally biased region" description="Pro residues" evidence="5">
    <location>
        <begin position="234"/>
        <end position="243"/>
    </location>
</feature>
<feature type="active site" evidence="2">
    <location>
        <position position="453"/>
    </location>
</feature>
<feature type="modified residue" description="N6-lipoyllysine" evidence="1 3">
    <location>
        <position position="96"/>
    </location>
</feature>
<dbReference type="EC" id="2.3.1.12" evidence="6"/>
<dbReference type="EMBL" id="AF066079">
    <property type="protein sequence ID" value="AAD55139.1"/>
    <property type="molecule type" value="mRNA"/>
</dbReference>
<dbReference type="EMBL" id="AB023041">
    <property type="protein sequence ID" value="BAB01047.1"/>
    <property type="status" value="ALT_INIT"/>
    <property type="molecule type" value="Genomic_DNA"/>
</dbReference>
<dbReference type="EMBL" id="CP002686">
    <property type="protein sequence ID" value="AEE77080.1"/>
    <property type="molecule type" value="Genomic_DNA"/>
</dbReference>
<dbReference type="EMBL" id="AY037262">
    <property type="protein sequence ID" value="AAK59863.1"/>
    <property type="molecule type" value="mRNA"/>
</dbReference>
<dbReference type="EMBL" id="BT002343">
    <property type="protein sequence ID" value="AAN86176.1"/>
    <property type="molecule type" value="mRNA"/>
</dbReference>
<dbReference type="RefSeq" id="NP_189215.1">
    <property type="nucleotide sequence ID" value="NM_113489.3"/>
</dbReference>
<dbReference type="SMR" id="Q9SQI8"/>
<dbReference type="BioGRID" id="7512">
    <property type="interactions" value="14"/>
</dbReference>
<dbReference type="FunCoup" id="Q9SQI8">
    <property type="interactions" value="874"/>
</dbReference>
<dbReference type="IntAct" id="Q9SQI8">
    <property type="interactions" value="4"/>
</dbReference>
<dbReference type="STRING" id="3702.Q9SQI8"/>
<dbReference type="iPTMnet" id="Q9SQI8"/>
<dbReference type="SwissPalm" id="Q9SQI8"/>
<dbReference type="PaxDb" id="3702-AT3G25860.1"/>
<dbReference type="ProteomicsDB" id="250782"/>
<dbReference type="EnsemblPlants" id="AT3G25860.1">
    <property type="protein sequence ID" value="AT3G25860.1"/>
    <property type="gene ID" value="AT3G25860"/>
</dbReference>
<dbReference type="GeneID" id="822181"/>
<dbReference type="Gramene" id="AT3G25860.1">
    <property type="protein sequence ID" value="AT3G25860.1"/>
    <property type="gene ID" value="AT3G25860"/>
</dbReference>
<dbReference type="KEGG" id="ath:AT3G25860"/>
<dbReference type="Araport" id="AT3G25860"/>
<dbReference type="TAIR" id="AT3G25860">
    <property type="gene designation" value="LTA2"/>
</dbReference>
<dbReference type="eggNOG" id="KOG0557">
    <property type="taxonomic scope" value="Eukaryota"/>
</dbReference>
<dbReference type="HOGENOM" id="CLU_016733_10_2_1"/>
<dbReference type="InParanoid" id="Q9SQI8"/>
<dbReference type="OMA" id="VEIECWQ"/>
<dbReference type="OrthoDB" id="537444at2759"/>
<dbReference type="PhylomeDB" id="Q9SQI8"/>
<dbReference type="BioCyc" id="ARA:AT3G25860-MONOMER"/>
<dbReference type="PRO" id="PR:Q9SQI8"/>
<dbReference type="Proteomes" id="UP000006548">
    <property type="component" value="Chromosome 3"/>
</dbReference>
<dbReference type="ExpressionAtlas" id="Q9SQI8">
    <property type="expression patterns" value="baseline and differential"/>
</dbReference>
<dbReference type="GO" id="GO:0009507">
    <property type="term" value="C:chloroplast"/>
    <property type="evidence" value="ECO:0007005"/>
    <property type="project" value="TAIR"/>
</dbReference>
<dbReference type="GO" id="GO:0009941">
    <property type="term" value="C:chloroplast envelope"/>
    <property type="evidence" value="ECO:0007005"/>
    <property type="project" value="TAIR"/>
</dbReference>
<dbReference type="GO" id="GO:0009570">
    <property type="term" value="C:chloroplast stroma"/>
    <property type="evidence" value="ECO:0000314"/>
    <property type="project" value="TAIR"/>
</dbReference>
<dbReference type="GO" id="GO:0009534">
    <property type="term" value="C:chloroplast thylakoid"/>
    <property type="evidence" value="ECO:0007005"/>
    <property type="project" value="TAIR"/>
</dbReference>
<dbReference type="GO" id="GO:0005829">
    <property type="term" value="C:cytosol"/>
    <property type="evidence" value="ECO:0007005"/>
    <property type="project" value="TAIR"/>
</dbReference>
<dbReference type="GO" id="GO:0022626">
    <property type="term" value="C:cytosolic ribosome"/>
    <property type="evidence" value="ECO:0007005"/>
    <property type="project" value="TAIR"/>
</dbReference>
<dbReference type="GO" id="GO:0045254">
    <property type="term" value="C:pyruvate dehydrogenase complex"/>
    <property type="evidence" value="ECO:0007669"/>
    <property type="project" value="InterPro"/>
</dbReference>
<dbReference type="GO" id="GO:0004742">
    <property type="term" value="F:dihydrolipoyllysine-residue acetyltransferase activity"/>
    <property type="evidence" value="ECO:0000314"/>
    <property type="project" value="TAIR"/>
</dbReference>
<dbReference type="GO" id="GO:0006096">
    <property type="term" value="P:glycolytic process"/>
    <property type="evidence" value="ECO:0007669"/>
    <property type="project" value="UniProtKB-KW"/>
</dbReference>
<dbReference type="GO" id="GO:0006086">
    <property type="term" value="P:pyruvate decarboxylation to acetyl-CoA"/>
    <property type="evidence" value="ECO:0000304"/>
    <property type="project" value="TAIR"/>
</dbReference>
<dbReference type="CDD" id="cd06849">
    <property type="entry name" value="lipoyl_domain"/>
    <property type="match status" value="1"/>
</dbReference>
<dbReference type="FunFam" id="2.40.50.100:FF:000010">
    <property type="entry name" value="Acetyltransferase component of pyruvate dehydrogenase complex"/>
    <property type="match status" value="1"/>
</dbReference>
<dbReference type="Gene3D" id="2.40.50.100">
    <property type="match status" value="1"/>
</dbReference>
<dbReference type="Gene3D" id="3.30.559.10">
    <property type="entry name" value="Chloramphenicol acetyltransferase-like domain"/>
    <property type="match status" value="1"/>
</dbReference>
<dbReference type="Gene3D" id="4.10.320.10">
    <property type="entry name" value="E3-binding domain"/>
    <property type="match status" value="1"/>
</dbReference>
<dbReference type="InterPro" id="IPR003016">
    <property type="entry name" value="2-oxoA_DH_lipoyl-BS"/>
</dbReference>
<dbReference type="InterPro" id="IPR001078">
    <property type="entry name" value="2-oxoacid_DH_actylTfrase"/>
</dbReference>
<dbReference type="InterPro" id="IPR000089">
    <property type="entry name" value="Biotin_lipoyl"/>
</dbReference>
<dbReference type="InterPro" id="IPR023213">
    <property type="entry name" value="CAT-like_dom_sf"/>
</dbReference>
<dbReference type="InterPro" id="IPR045257">
    <property type="entry name" value="E2/Pdx1"/>
</dbReference>
<dbReference type="InterPro" id="IPR036625">
    <property type="entry name" value="E3-bd_dom_sf"/>
</dbReference>
<dbReference type="InterPro" id="IPR004167">
    <property type="entry name" value="PSBD"/>
</dbReference>
<dbReference type="InterPro" id="IPR011053">
    <property type="entry name" value="Single_hybrid_motif"/>
</dbReference>
<dbReference type="PANTHER" id="PTHR23151">
    <property type="entry name" value="DIHYDROLIPOAMIDE ACETYL/SUCCINYL-TRANSFERASE-RELATED"/>
    <property type="match status" value="1"/>
</dbReference>
<dbReference type="PANTHER" id="PTHR23151:SF83">
    <property type="entry name" value="DIHYDROLIPOYLLYSINE-RESIDUE ACETYLTRANSFERASE COMPONENT 4 OF PYRUVATE DEHYDROGENASE COMPLEX, CHLOROPLASTIC"/>
    <property type="match status" value="1"/>
</dbReference>
<dbReference type="Pfam" id="PF00198">
    <property type="entry name" value="2-oxoacid_dh"/>
    <property type="match status" value="1"/>
</dbReference>
<dbReference type="Pfam" id="PF00364">
    <property type="entry name" value="Biotin_lipoyl"/>
    <property type="match status" value="1"/>
</dbReference>
<dbReference type="Pfam" id="PF02817">
    <property type="entry name" value="E3_binding"/>
    <property type="match status" value="1"/>
</dbReference>
<dbReference type="SUPFAM" id="SSF52777">
    <property type="entry name" value="CoA-dependent acyltransferases"/>
    <property type="match status" value="1"/>
</dbReference>
<dbReference type="SUPFAM" id="SSF47005">
    <property type="entry name" value="Peripheral subunit-binding domain of 2-oxo acid dehydrogenase complex"/>
    <property type="match status" value="1"/>
</dbReference>
<dbReference type="SUPFAM" id="SSF51230">
    <property type="entry name" value="Single hybrid motif"/>
    <property type="match status" value="1"/>
</dbReference>
<dbReference type="PROSITE" id="PS50968">
    <property type="entry name" value="BIOTINYL_LIPOYL"/>
    <property type="match status" value="1"/>
</dbReference>
<dbReference type="PROSITE" id="PS00189">
    <property type="entry name" value="LIPOYL"/>
    <property type="match status" value="1"/>
</dbReference>
<dbReference type="PROSITE" id="PS51826">
    <property type="entry name" value="PSBD"/>
    <property type="match status" value="1"/>
</dbReference>
<name>ODP24_ARATH</name>
<comment type="function">
    <text evidence="9">The pyruvate dehydrogenase complex catalyzes the overall conversion of pyruvate to acetyl-CoA and CO(2). It contains multiple copies of three enzymatic components: pyruvate dehydrogenase (E1), dihydrolipoamide acetyltransferase (E2) and lipoamide dehydrogenase (E3).</text>
</comment>
<comment type="catalytic activity">
    <reaction evidence="6">
        <text>N(6)-[(R)-dihydrolipoyl]-L-lysyl-[protein] + acetyl-CoA = N(6)-[(R)-S(8)-acetyldihydrolipoyl]-L-lysyl-[protein] + CoA</text>
        <dbReference type="Rhea" id="RHEA:17017"/>
        <dbReference type="Rhea" id="RHEA-COMP:10475"/>
        <dbReference type="Rhea" id="RHEA-COMP:10478"/>
        <dbReference type="ChEBI" id="CHEBI:57287"/>
        <dbReference type="ChEBI" id="CHEBI:57288"/>
        <dbReference type="ChEBI" id="CHEBI:83100"/>
        <dbReference type="ChEBI" id="CHEBI:83111"/>
        <dbReference type="EC" id="2.3.1.12"/>
    </reaction>
</comment>
<comment type="cofactor">
    <cofactor evidence="1">
        <name>(R)-lipoate</name>
        <dbReference type="ChEBI" id="CHEBI:83088"/>
    </cofactor>
    <text evidence="1">Binds 1 lipoyl cofactor covalently.</text>
</comment>
<comment type="subcellular location">
    <subcellularLocation>
        <location evidence="6">Plastid</location>
        <location evidence="6">Chloroplast stroma</location>
    </subcellularLocation>
</comment>
<comment type="disruption phenotype">
    <text evidence="7">Embryonic lethality when homozygous.</text>
</comment>
<comment type="similarity">
    <text evidence="8">Belongs to the 2-oxoacid dehydrogenase family.</text>
</comment>
<comment type="sequence caution" evidence="8">
    <conflict type="erroneous initiation">
        <sequence resource="EMBL-CDS" id="BAB01047"/>
    </conflict>
    <text>Truncated N-terminus.</text>
</comment>
<accession>Q9SQI8</accession>
<accession>Q9LUA6</accession>
<reference key="1">
    <citation type="journal article" date="1999" name="Plant Physiol.">
        <title>Cloning and characterization of the dihydrolipoamide S-acetyltransferase subunit of the plastid pyruvate dehydrogenase complex (E2) from Arabidopsis.</title>
        <authorList>
            <person name="Mooney B.P."/>
            <person name="Miernyk J.A."/>
            <person name="Randall D.D."/>
        </authorList>
    </citation>
    <scope>NUCLEOTIDE SEQUENCE [MRNA]</scope>
    <scope>FUNCTION</scope>
    <scope>CATALYTIC ACTIVITY</scope>
    <scope>SUBCELLULAR LOCATION</scope>
    <scope>TISSUE SPECIFICITY</scope>
</reference>
<reference key="2">
    <citation type="journal article" date="2000" name="DNA Res.">
        <title>Structural analysis of Arabidopsis thaliana chromosome 3. I. Sequence features of the regions of 4,504,864 bp covered by sixty P1 and TAC clones.</title>
        <authorList>
            <person name="Sato S."/>
            <person name="Nakamura Y."/>
            <person name="Kaneko T."/>
            <person name="Katoh T."/>
            <person name="Asamizu E."/>
            <person name="Tabata S."/>
        </authorList>
    </citation>
    <scope>NUCLEOTIDE SEQUENCE [LARGE SCALE GENOMIC DNA]</scope>
    <source>
        <strain>cv. Columbia</strain>
    </source>
</reference>
<reference key="3">
    <citation type="journal article" date="2017" name="Plant J.">
        <title>Araport11: a complete reannotation of the Arabidopsis thaliana reference genome.</title>
        <authorList>
            <person name="Cheng C.Y."/>
            <person name="Krishnakumar V."/>
            <person name="Chan A.P."/>
            <person name="Thibaud-Nissen F."/>
            <person name="Schobel S."/>
            <person name="Town C.D."/>
        </authorList>
    </citation>
    <scope>GENOME REANNOTATION</scope>
    <source>
        <strain>cv. Columbia</strain>
    </source>
</reference>
<reference key="4">
    <citation type="journal article" date="2003" name="Science">
        <title>Empirical analysis of transcriptional activity in the Arabidopsis genome.</title>
        <authorList>
            <person name="Yamada K."/>
            <person name="Lim J."/>
            <person name="Dale J.M."/>
            <person name="Chen H."/>
            <person name="Shinn P."/>
            <person name="Palm C.J."/>
            <person name="Southwick A.M."/>
            <person name="Wu H.C."/>
            <person name="Kim C.J."/>
            <person name="Nguyen M."/>
            <person name="Pham P.K."/>
            <person name="Cheuk R.F."/>
            <person name="Karlin-Newmann G."/>
            <person name="Liu S.X."/>
            <person name="Lam B."/>
            <person name="Sakano H."/>
            <person name="Wu T."/>
            <person name="Yu G."/>
            <person name="Miranda M."/>
            <person name="Quach H.L."/>
            <person name="Tripp M."/>
            <person name="Chang C.H."/>
            <person name="Lee J.M."/>
            <person name="Toriumi M.J."/>
            <person name="Chan M.M."/>
            <person name="Tang C.C."/>
            <person name="Onodera C.S."/>
            <person name="Deng J.M."/>
            <person name="Akiyama K."/>
            <person name="Ansari Y."/>
            <person name="Arakawa T."/>
            <person name="Banh J."/>
            <person name="Banno F."/>
            <person name="Bowser L."/>
            <person name="Brooks S.Y."/>
            <person name="Carninci P."/>
            <person name="Chao Q."/>
            <person name="Choy N."/>
            <person name="Enju A."/>
            <person name="Goldsmith A.D."/>
            <person name="Gurjal M."/>
            <person name="Hansen N.F."/>
            <person name="Hayashizaki Y."/>
            <person name="Johnson-Hopson C."/>
            <person name="Hsuan V.W."/>
            <person name="Iida K."/>
            <person name="Karnes M."/>
            <person name="Khan S."/>
            <person name="Koesema E."/>
            <person name="Ishida J."/>
            <person name="Jiang P.X."/>
            <person name="Jones T."/>
            <person name="Kawai J."/>
            <person name="Kamiya A."/>
            <person name="Meyers C."/>
            <person name="Nakajima M."/>
            <person name="Narusaka M."/>
            <person name="Seki M."/>
            <person name="Sakurai T."/>
            <person name="Satou M."/>
            <person name="Tamse R."/>
            <person name="Vaysberg M."/>
            <person name="Wallender E.K."/>
            <person name="Wong C."/>
            <person name="Yamamura Y."/>
            <person name="Yuan S."/>
            <person name="Shinozaki K."/>
            <person name="Davis R.W."/>
            <person name="Theologis A."/>
            <person name="Ecker J.R."/>
        </authorList>
    </citation>
    <scope>NUCLEOTIDE SEQUENCE [LARGE SCALE MRNA]</scope>
    <source>
        <strain>cv. Columbia</strain>
    </source>
</reference>
<reference key="5">
    <citation type="journal article" date="2003" name="Plant Mol. Biol.">
        <title>Disruption of plE2, the gene for the E2 subunit of the plastid pyruvate dehydrogenase complex, in Arabidopsis causes an early embryo lethal phenotype.</title>
        <authorList>
            <person name="Lin M."/>
            <person name="Behal R."/>
            <person name="Oliver D.J."/>
        </authorList>
    </citation>
    <scope>DISRUPTION PHENOTYPE</scope>
    <source>
        <strain>cv. Wassilewskija</strain>
    </source>
</reference>
<protein>
    <recommendedName>
        <fullName>Dihydrolipoyllysine-residue acetyltransferase component 4 of pyruvate dehydrogenase complex, chloroplastic</fullName>
        <ecNumber evidence="6">2.3.1.12</ecNumber>
    </recommendedName>
    <alternativeName>
        <fullName>Dihydrolipoamide S-acetyltransferase component 4 of pyruvate dehydrogenase complex</fullName>
    </alternativeName>
    <alternativeName>
        <fullName>Pyruvate dehydrogenase complex component E2 4</fullName>
        <shortName>PDC-E2 4</shortName>
        <shortName>PDCE2 4</shortName>
        <shortName>plE2</shortName>
    </alternativeName>
</protein>
<proteinExistence type="evidence at protein level"/>
<gene>
    <name type="primary">LTA2</name>
    <name type="ordered locus">At3g25860</name>
    <name type="ORF">MPE11.1</name>
</gene>
<organism>
    <name type="scientific">Arabidopsis thaliana</name>
    <name type="common">Mouse-ear cress</name>
    <dbReference type="NCBI Taxonomy" id="3702"/>
    <lineage>
        <taxon>Eukaryota</taxon>
        <taxon>Viridiplantae</taxon>
        <taxon>Streptophyta</taxon>
        <taxon>Embryophyta</taxon>
        <taxon>Tracheophyta</taxon>
        <taxon>Spermatophyta</taxon>
        <taxon>Magnoliopsida</taxon>
        <taxon>eudicotyledons</taxon>
        <taxon>Gunneridae</taxon>
        <taxon>Pentapetalae</taxon>
        <taxon>rosids</taxon>
        <taxon>malvids</taxon>
        <taxon>Brassicales</taxon>
        <taxon>Brassicaceae</taxon>
        <taxon>Camelineae</taxon>
        <taxon>Arabidopsis</taxon>
    </lineage>
</organism>
<evidence type="ECO:0000250" key="1"/>
<evidence type="ECO:0000255" key="2"/>
<evidence type="ECO:0000255" key="3">
    <source>
        <dbReference type="PROSITE-ProRule" id="PRU01066"/>
    </source>
</evidence>
<evidence type="ECO:0000255" key="4">
    <source>
        <dbReference type="PROSITE-ProRule" id="PRU01170"/>
    </source>
</evidence>
<evidence type="ECO:0000256" key="5">
    <source>
        <dbReference type="SAM" id="MobiDB-lite"/>
    </source>
</evidence>
<evidence type="ECO:0000269" key="6">
    <source>
    </source>
</evidence>
<evidence type="ECO:0000269" key="7">
    <source>
    </source>
</evidence>
<evidence type="ECO:0000305" key="8"/>
<evidence type="ECO:0000305" key="9">
    <source>
    </source>
</evidence>
<keyword id="KW-0012">Acyltransferase</keyword>
<keyword id="KW-0150">Chloroplast</keyword>
<keyword id="KW-0324">Glycolysis</keyword>
<keyword id="KW-0450">Lipoyl</keyword>
<keyword id="KW-0934">Plastid</keyword>
<keyword id="KW-1185">Reference proteome</keyword>
<keyword id="KW-0808">Transferase</keyword>
<keyword id="KW-0809">Transit peptide</keyword>